<keyword id="KW-0067">ATP-binding</keyword>
<keyword id="KW-0963">Cytoplasm</keyword>
<keyword id="KW-0436">Ligase</keyword>
<keyword id="KW-0547">Nucleotide-binding</keyword>
<keyword id="KW-0694">RNA-binding</keyword>
<keyword id="KW-0819">tRNA processing</keyword>
<keyword id="KW-0820">tRNA-binding</keyword>
<organism>
    <name type="scientific">Thermosipho melanesiensis (strain DSM 12029 / CIP 104789 / BI429)</name>
    <dbReference type="NCBI Taxonomy" id="391009"/>
    <lineage>
        <taxon>Bacteria</taxon>
        <taxon>Thermotogati</taxon>
        <taxon>Thermotogota</taxon>
        <taxon>Thermotogae</taxon>
        <taxon>Thermotogales</taxon>
        <taxon>Fervidobacteriaceae</taxon>
        <taxon>Thermosipho</taxon>
    </lineage>
</organism>
<evidence type="ECO:0000255" key="1">
    <source>
        <dbReference type="HAMAP-Rule" id="MF_01539"/>
    </source>
</evidence>
<reference key="1">
    <citation type="submission" date="2007-05" db="EMBL/GenBank/DDBJ databases">
        <title>Complete sequence of Thermosipho melanesiensis BI429.</title>
        <authorList>
            <consortium name="US DOE Joint Genome Institute"/>
            <person name="Copeland A."/>
            <person name="Lucas S."/>
            <person name="Lapidus A."/>
            <person name="Barry K."/>
            <person name="Glavina del Rio T."/>
            <person name="Dalin E."/>
            <person name="Tice H."/>
            <person name="Pitluck S."/>
            <person name="Chertkov O."/>
            <person name="Brettin T."/>
            <person name="Bruce D."/>
            <person name="Detter J.C."/>
            <person name="Han C."/>
            <person name="Schmutz J."/>
            <person name="Larimer F."/>
            <person name="Land M."/>
            <person name="Hauser L."/>
            <person name="Kyrpides N."/>
            <person name="Mikhailova N."/>
            <person name="Nelson K."/>
            <person name="Gogarten J.P."/>
            <person name="Noll K."/>
            <person name="Richardson P."/>
        </authorList>
    </citation>
    <scope>NUCLEOTIDE SEQUENCE [LARGE SCALE GENOMIC DNA]</scope>
    <source>
        <strain>DSM 12029 / CIP 104789 / BI429</strain>
    </source>
</reference>
<accession>A6LP38</accession>
<proteinExistence type="inferred from homology"/>
<feature type="chain" id="PRO_1000068754" description="tRNA(Met) cytidine acetate ligase">
    <location>
        <begin position="1"/>
        <end position="425"/>
    </location>
</feature>
<feature type="binding site" evidence="1">
    <location>
        <begin position="7"/>
        <end position="20"/>
    </location>
    <ligand>
        <name>ATP</name>
        <dbReference type="ChEBI" id="CHEBI:30616"/>
    </ligand>
</feature>
<feature type="binding site" evidence="1">
    <location>
        <position position="102"/>
    </location>
    <ligand>
        <name>ATP</name>
        <dbReference type="ChEBI" id="CHEBI:30616"/>
    </ligand>
</feature>
<feature type="binding site" evidence="1">
    <location>
        <position position="165"/>
    </location>
    <ligand>
        <name>ATP</name>
        <dbReference type="ChEBI" id="CHEBI:30616"/>
    </ligand>
</feature>
<feature type="binding site" evidence="1">
    <location>
        <begin position="190"/>
        <end position="191"/>
    </location>
    <ligand>
        <name>ATP</name>
        <dbReference type="ChEBI" id="CHEBI:30616"/>
    </ligand>
</feature>
<protein>
    <recommendedName>
        <fullName evidence="1">tRNA(Met) cytidine acetate ligase</fullName>
        <ecNumber evidence="1">6.3.4.-</ecNumber>
    </recommendedName>
</protein>
<gene>
    <name evidence="1" type="primary">tmcAL</name>
    <name type="ordered locus">Tmel_1854</name>
</gene>
<name>TMCAL_THEM4</name>
<dbReference type="EC" id="6.3.4.-" evidence="1"/>
<dbReference type="EMBL" id="CP000716">
    <property type="protein sequence ID" value="ABR31689.1"/>
    <property type="molecule type" value="Genomic_DNA"/>
</dbReference>
<dbReference type="RefSeq" id="WP_012058047.1">
    <property type="nucleotide sequence ID" value="NC_009616.1"/>
</dbReference>
<dbReference type="SMR" id="A6LP38"/>
<dbReference type="STRING" id="391009.Tmel_1854"/>
<dbReference type="KEGG" id="tme:Tmel_1854"/>
<dbReference type="eggNOG" id="COG1323">
    <property type="taxonomic scope" value="Bacteria"/>
</dbReference>
<dbReference type="HOGENOM" id="CLU_038915_0_1_0"/>
<dbReference type="OrthoDB" id="9769796at2"/>
<dbReference type="Proteomes" id="UP000001110">
    <property type="component" value="Chromosome"/>
</dbReference>
<dbReference type="GO" id="GO:0005737">
    <property type="term" value="C:cytoplasm"/>
    <property type="evidence" value="ECO:0007669"/>
    <property type="project" value="UniProtKB-SubCell"/>
</dbReference>
<dbReference type="GO" id="GO:0005524">
    <property type="term" value="F:ATP binding"/>
    <property type="evidence" value="ECO:0007669"/>
    <property type="project" value="UniProtKB-KW"/>
</dbReference>
<dbReference type="GO" id="GO:0016879">
    <property type="term" value="F:ligase activity, forming carbon-nitrogen bonds"/>
    <property type="evidence" value="ECO:0007669"/>
    <property type="project" value="UniProtKB-UniRule"/>
</dbReference>
<dbReference type="GO" id="GO:0000049">
    <property type="term" value="F:tRNA binding"/>
    <property type="evidence" value="ECO:0007669"/>
    <property type="project" value="UniProtKB-KW"/>
</dbReference>
<dbReference type="GO" id="GO:0006400">
    <property type="term" value="P:tRNA modification"/>
    <property type="evidence" value="ECO:0007669"/>
    <property type="project" value="UniProtKB-UniRule"/>
</dbReference>
<dbReference type="Gene3D" id="3.40.50.620">
    <property type="entry name" value="HUPs"/>
    <property type="match status" value="1"/>
</dbReference>
<dbReference type="HAMAP" id="MF_01539">
    <property type="entry name" value="TmcAL"/>
    <property type="match status" value="1"/>
</dbReference>
<dbReference type="InterPro" id="IPR014729">
    <property type="entry name" value="Rossmann-like_a/b/a_fold"/>
</dbReference>
<dbReference type="InterPro" id="IPR008513">
    <property type="entry name" value="tRNA(Met)_cyd_acetate_ligase"/>
</dbReference>
<dbReference type="NCBIfam" id="NF010191">
    <property type="entry name" value="PRK13670.1"/>
    <property type="match status" value="1"/>
</dbReference>
<dbReference type="PANTHER" id="PTHR37825">
    <property type="entry name" value="TRNA(MET) CYTIDINE ACETATE LIGASE"/>
    <property type="match status" value="1"/>
</dbReference>
<dbReference type="PANTHER" id="PTHR37825:SF1">
    <property type="entry name" value="TRNA(MET) CYTIDINE ACETATE LIGASE"/>
    <property type="match status" value="1"/>
</dbReference>
<dbReference type="Pfam" id="PF05636">
    <property type="entry name" value="HIGH_NTase1"/>
    <property type="match status" value="1"/>
</dbReference>
<dbReference type="SUPFAM" id="SSF52374">
    <property type="entry name" value="Nucleotidylyl transferase"/>
    <property type="match status" value="1"/>
</dbReference>
<sequence length="425" mass="49234">MKVLGVIVEYNPFHNGHLYHLQQAKKIVSPDYVIAIMSGNFCQRGEPAIINKFARAEIALKNGIDVVFELPTVYALQDAGGFAFGAITLLDKLTVVTDVVFGSESADKNFITTVAKTLLENPDKFDNLLKIELKKGLSFPNARKFALKKFLNENEDFLKMIENSNDILGIEYVKSILKLKSKINYHLIKRIGAKYNDTELESKYSSATAIRNAIVRNNPFETYVPQTSYKVLKREFSYGRGPVSLENMEQFILTFLRLKHRKDFESIYSFTEGLDQRFIKAIKTSKKLSDFLEKVKTKRFTYSRIRRAIFHALFDFKKEYIEFSNKLGTQYARILGFTKKGQKLLSKIKKASKIPIISNPSLHEKVLKKVLTDKDRKWEVNKKLFIWQFEKDIVASNIYTMFYPQKNERKYGLDFRKPIIEGENE</sequence>
<comment type="function">
    <text evidence="1">Catalyzes the formation of N(4)-acetylcytidine (ac(4)C) at the wobble position of elongator tRNA(Met), using acetate and ATP as substrates. First activates an acetate ion to form acetyladenylate (Ac-AMP) and then transfers the acetyl group to tRNA to form ac(4)C34.</text>
</comment>
<comment type="catalytic activity">
    <reaction evidence="1">
        <text>cytidine(34) in elongator tRNA(Met) + acetate + ATP = N(4)-acetylcytidine(34) in elongator tRNA(Met) + AMP + diphosphate</text>
        <dbReference type="Rhea" id="RHEA:58144"/>
        <dbReference type="Rhea" id="RHEA-COMP:10693"/>
        <dbReference type="Rhea" id="RHEA-COMP:10694"/>
        <dbReference type="ChEBI" id="CHEBI:30089"/>
        <dbReference type="ChEBI" id="CHEBI:30616"/>
        <dbReference type="ChEBI" id="CHEBI:33019"/>
        <dbReference type="ChEBI" id="CHEBI:74900"/>
        <dbReference type="ChEBI" id="CHEBI:82748"/>
        <dbReference type="ChEBI" id="CHEBI:456215"/>
    </reaction>
</comment>
<comment type="subcellular location">
    <subcellularLocation>
        <location evidence="1">Cytoplasm</location>
    </subcellularLocation>
</comment>
<comment type="similarity">
    <text evidence="1">Belongs to the TmcAL family.</text>
</comment>